<sequence>MQDISTTTASTNYLKADGDTGAVFSITSQQQQIHYMRKQKPDHEKTREELIEEINHLRAVSNSNKNARIMLDEMYQFVALLDVNGNLLDVNEPALQGGGMIRSSIQGIPFWDCRWWATSQENIDNVREAVHKASKGEFIRYETEIFGKSAGTEKITIDFSLMPLFNDKGEVSLILPEGRNITEKRLGELEIERKNNELRSLYEKIKELDELKTQFFANVSHELRTPLALIVGPTDKLLKDENVDINVRKDLEIVARNARGLLKIVNNLLDISRLEAGKMNLNYSMVNLGQTVHLIASCFEILAREKSLDFSIITPSEPMMAAIDADKMQRVITNLISNAFKFTPSGGAVKCILEKFDLSPNKPGFQIVVSDTGPGIPDNLHEIIFERFRQVDGSSTRKHGGTGLGLSIVKEFVTLHGGTVTIHNISTGGAQFTLRLPLTPNMDEHLYKKTISDQNISEIQQQLYQQQQQEQQQQQQQQQNLQQPKLILNNIDNKYKINDDDNDDDDDDDDEDGLNFNILKKTNTSSDIASNALKDNMGSIMGVHAIAQQAVEELTEKQFYQSQENIHNKPIVLVVEDNPEMNRFIAELLSKYYFVVTAFDGVEGIEKTRAITPDLIVTDCMMPRMSGDEMVEQLRSDEQFDNIPILLLTAKADENLRIKLLQNGVSDYVNKPFSSEELVARVVNLMTMKKAKQFLQEELSSANTDLQELINQLTNKKRDLQTLVGELEKERNLLNNTNKSKDEFFMNLSHELRTPLNGILGWCQLLLYDIDSGGSSGGGSGSISGDDSTVRTGLETIERCASSQNQLINDLLDMSLIIGDKFSLILGDVDLPILIENAISSILVTAQSKKISVHSNIQGEGEEESSILRNIVGDKARLQQVIWNLLSNSIKFTKEKGRIHLNLKVVNQIPSREVLGFCSNPMFNTINRHGDRWILFTITDNGKGIPKQFLPSVFDRFKQADCSSTRSYGGLGIGLSITQNIIHLHKGAVYANSEGENKGSQFTVVLPIIKGSSSSNSSPSNQLSCSSSPPLIKKPFFSQPTNYINNNNNNNNNNNNNNNNNNNNNNNNNNNNNYNNYNNNNSNNNNNSNNNNNNNNNNNNNNNNNNNNNNNNNNNLNINNLINNNHNNNNNNYHHNNNNNNNSNNNEKLGKRQREEINNNENNNVDLRLRTPPPPPTSSISENFLVNSSNLIPSPALNPINNNNNSNNNNNNIGDIKKINLEISQIPSTNLNPKLSLVINNNNNNNNNNNSLLKTIITNAINNNINNSNNDDNSNNTTIPTPPSSAINMINSLPLPSPSPSFILPTLSPFSSPLSELKSSSNNNNNNNNNSNNNNNNSMSPNLRSPKANSNKNLLGGIQIMLVDDLEETTHLFSSMLYKLGAKRIDTFQRVSDAYAFLCDSSKPQPDIILSDLTMPFEDGYSMVRKLRDREKINTQNKKTPIIALTASVSSSDKEKVLKSGFDLHCSKPVNFLELSNSILTLIEKYNTTVNIDLIKEQEQNNNNNNNNNNNNNNNNNNNNNNINNGNDDDSLLLTDSRPCKKANSQ</sequence>
<dbReference type="EC" id="2.7.13.3"/>
<dbReference type="EMBL" id="AF361475">
    <property type="protein sequence ID" value="AAK50005.1"/>
    <property type="molecule type" value="Genomic_DNA"/>
</dbReference>
<dbReference type="EMBL" id="AAFI02000047">
    <property type="protein sequence ID" value="EAL66266.1"/>
    <property type="molecule type" value="Genomic_DNA"/>
</dbReference>
<dbReference type="EMBL" id="AF029704">
    <property type="protein sequence ID" value="AAB84171.1"/>
    <property type="status" value="ALT_FRAME"/>
    <property type="molecule type" value="mRNA"/>
</dbReference>
<dbReference type="RefSeq" id="XP_640257.1">
    <property type="nucleotide sequence ID" value="XM_635165.1"/>
</dbReference>
<dbReference type="SMR" id="Q54SP4"/>
<dbReference type="STRING" id="44689.Q54SP4"/>
<dbReference type="GlyGen" id="Q54SP4">
    <property type="glycosylation" value="1 site"/>
</dbReference>
<dbReference type="PaxDb" id="44689-DDB0215384"/>
<dbReference type="EnsemblProtists" id="EAL66266">
    <property type="protein sequence ID" value="EAL66266"/>
    <property type="gene ID" value="DDB_G0282289"/>
</dbReference>
<dbReference type="GeneID" id="8623516"/>
<dbReference type="KEGG" id="ddi:DDB_G0282289"/>
<dbReference type="dictyBase" id="DDB_G0282289">
    <property type="gene designation" value="dhkD"/>
</dbReference>
<dbReference type="VEuPathDB" id="AmoebaDB:DDB_G0282289"/>
<dbReference type="eggNOG" id="KOG0519">
    <property type="taxonomic scope" value="Eukaryota"/>
</dbReference>
<dbReference type="HOGENOM" id="CLU_246615_0_0_1"/>
<dbReference type="InParanoid" id="Q54SP4"/>
<dbReference type="OMA" id="IMLDEMY"/>
<dbReference type="PhylomeDB" id="Q54SP4"/>
<dbReference type="PRO" id="PR:Q54SP4"/>
<dbReference type="Proteomes" id="UP000002195">
    <property type="component" value="Chromosome 3"/>
</dbReference>
<dbReference type="GO" id="GO:0005524">
    <property type="term" value="F:ATP binding"/>
    <property type="evidence" value="ECO:0007669"/>
    <property type="project" value="UniProtKB-KW"/>
</dbReference>
<dbReference type="GO" id="GO:0000155">
    <property type="term" value="F:phosphorelay sensor kinase activity"/>
    <property type="evidence" value="ECO:0000318"/>
    <property type="project" value="GO_Central"/>
</dbReference>
<dbReference type="GO" id="GO:0031288">
    <property type="term" value="P:sorocarp morphogenesis"/>
    <property type="evidence" value="ECO:0000315"/>
    <property type="project" value="dictyBase"/>
</dbReference>
<dbReference type="GO" id="GO:0044671">
    <property type="term" value="P:sorocarp spore cell differentiation"/>
    <property type="evidence" value="ECO:0000315"/>
    <property type="project" value="dictyBase"/>
</dbReference>
<dbReference type="GO" id="GO:0031149">
    <property type="term" value="P:sorocarp stalk cell differentiation"/>
    <property type="evidence" value="ECO:0000315"/>
    <property type="project" value="dictyBase"/>
</dbReference>
<dbReference type="CDD" id="cd16925">
    <property type="entry name" value="HATPase_TutC-TodS-like"/>
    <property type="match status" value="1"/>
</dbReference>
<dbReference type="CDD" id="cd00082">
    <property type="entry name" value="HisKA"/>
    <property type="match status" value="2"/>
</dbReference>
<dbReference type="CDD" id="cd00130">
    <property type="entry name" value="PAS"/>
    <property type="match status" value="1"/>
</dbReference>
<dbReference type="CDD" id="cd17580">
    <property type="entry name" value="REC_2_DhkD-like"/>
    <property type="match status" value="1"/>
</dbReference>
<dbReference type="FunFam" id="3.40.50.2300:FF:001042">
    <property type="match status" value="1"/>
</dbReference>
<dbReference type="FunFam" id="3.30.565.10:FF:000037">
    <property type="entry name" value="Hybrid sensor histidine kinase/response regulator"/>
    <property type="match status" value="1"/>
</dbReference>
<dbReference type="FunFam" id="3.40.50.2300:FF:000121">
    <property type="entry name" value="Sensor histidine kinase RcsC"/>
    <property type="match status" value="1"/>
</dbReference>
<dbReference type="FunFam" id="3.30.450.20:FF:000155">
    <property type="entry name" value="Sensor histidine kinase TodS"/>
    <property type="match status" value="1"/>
</dbReference>
<dbReference type="FunFam" id="3.30.565.10:FF:000217">
    <property type="entry name" value="Sensory transduction histidine kinase"/>
    <property type="match status" value="1"/>
</dbReference>
<dbReference type="FunFam" id="1.10.287.130:FF:000144">
    <property type="entry name" value="Two-component sensor histidine kinase"/>
    <property type="match status" value="1"/>
</dbReference>
<dbReference type="FunFam" id="1.10.287.130:FF:000045">
    <property type="entry name" value="Two-component system sensor histidine kinase/response regulator"/>
    <property type="match status" value="1"/>
</dbReference>
<dbReference type="Gene3D" id="1.10.287.130">
    <property type="match status" value="2"/>
</dbReference>
<dbReference type="Gene3D" id="3.40.50.2300">
    <property type="match status" value="2"/>
</dbReference>
<dbReference type="Gene3D" id="3.30.565.10">
    <property type="entry name" value="Histidine kinase-like ATPase, C-terminal domain"/>
    <property type="match status" value="2"/>
</dbReference>
<dbReference type="Gene3D" id="3.30.450.20">
    <property type="entry name" value="PAS domain"/>
    <property type="match status" value="1"/>
</dbReference>
<dbReference type="InterPro" id="IPR011006">
    <property type="entry name" value="CheY-like_superfamily"/>
</dbReference>
<dbReference type="InterPro" id="IPR036890">
    <property type="entry name" value="HATPase_C_sf"/>
</dbReference>
<dbReference type="InterPro" id="IPR005467">
    <property type="entry name" value="His_kinase_dom"/>
</dbReference>
<dbReference type="InterPro" id="IPR003661">
    <property type="entry name" value="HisK_dim/P_dom"/>
</dbReference>
<dbReference type="InterPro" id="IPR036097">
    <property type="entry name" value="HisK_dim/P_sf"/>
</dbReference>
<dbReference type="InterPro" id="IPR000014">
    <property type="entry name" value="PAS"/>
</dbReference>
<dbReference type="InterPro" id="IPR000700">
    <property type="entry name" value="PAS-assoc_C"/>
</dbReference>
<dbReference type="InterPro" id="IPR035965">
    <property type="entry name" value="PAS-like_dom_sf"/>
</dbReference>
<dbReference type="InterPro" id="IPR004358">
    <property type="entry name" value="Sig_transdc_His_kin-like_C"/>
</dbReference>
<dbReference type="InterPro" id="IPR001789">
    <property type="entry name" value="Sig_transdc_resp-reg_receiver"/>
</dbReference>
<dbReference type="PANTHER" id="PTHR43547:SF5">
    <property type="entry name" value="HYBRID SIGNAL TRANSDUCTION HISTIDINE KINASE D"/>
    <property type="match status" value="1"/>
</dbReference>
<dbReference type="PANTHER" id="PTHR43547">
    <property type="entry name" value="TWO-COMPONENT HISTIDINE KINASE"/>
    <property type="match status" value="1"/>
</dbReference>
<dbReference type="Pfam" id="PF02518">
    <property type="entry name" value="HATPase_c"/>
    <property type="match status" value="2"/>
</dbReference>
<dbReference type="Pfam" id="PF00512">
    <property type="entry name" value="HisKA"/>
    <property type="match status" value="2"/>
</dbReference>
<dbReference type="Pfam" id="PF00072">
    <property type="entry name" value="Response_reg"/>
    <property type="match status" value="2"/>
</dbReference>
<dbReference type="PRINTS" id="PR00344">
    <property type="entry name" value="BCTRLSENSOR"/>
</dbReference>
<dbReference type="SMART" id="SM00387">
    <property type="entry name" value="HATPase_c"/>
    <property type="match status" value="2"/>
</dbReference>
<dbReference type="SMART" id="SM00388">
    <property type="entry name" value="HisKA"/>
    <property type="match status" value="2"/>
</dbReference>
<dbReference type="SMART" id="SM00448">
    <property type="entry name" value="REC"/>
    <property type="match status" value="2"/>
</dbReference>
<dbReference type="SUPFAM" id="SSF55874">
    <property type="entry name" value="ATPase domain of HSP90 chaperone/DNA topoisomerase II/histidine kinase"/>
    <property type="match status" value="2"/>
</dbReference>
<dbReference type="SUPFAM" id="SSF52172">
    <property type="entry name" value="CheY-like"/>
    <property type="match status" value="2"/>
</dbReference>
<dbReference type="SUPFAM" id="SSF47384">
    <property type="entry name" value="Homodimeric domain of signal transducing histidine kinase"/>
    <property type="match status" value="2"/>
</dbReference>
<dbReference type="SUPFAM" id="SSF55785">
    <property type="entry name" value="PYP-like sensor domain (PAS domain)"/>
    <property type="match status" value="1"/>
</dbReference>
<dbReference type="PROSITE" id="PS50109">
    <property type="entry name" value="HIS_KIN"/>
    <property type="match status" value="2"/>
</dbReference>
<dbReference type="PROSITE" id="PS50113">
    <property type="entry name" value="PAC"/>
    <property type="match status" value="1"/>
</dbReference>
<dbReference type="PROSITE" id="PS50110">
    <property type="entry name" value="RESPONSE_REGULATORY"/>
    <property type="match status" value="2"/>
</dbReference>
<comment type="function">
    <text evidence="1">Acts as a receptor histidine kinase for a signal transduction pathway. This protein undergoes an ATP-dependent autophosphorylation at a conserved histidine residue in the kinase core, and a phosphoryl group is then transferred to a conserved aspartate residue in the receiver domain (By similarity).</text>
</comment>
<comment type="catalytic activity">
    <reaction>
        <text>ATP + protein L-histidine = ADP + protein N-phospho-L-histidine.</text>
        <dbReference type="EC" id="2.7.13.3"/>
    </reaction>
</comment>
<comment type="domain">
    <text>Atypical domain architecture: contains 2 histidine kinase/receiver domain modules.</text>
</comment>
<comment type="sequence caution" evidence="7">
    <conflict type="frameshift">
        <sequence resource="EMBL-CDS" id="AAB84171"/>
    </conflict>
</comment>
<name>DHKD_DICDI</name>
<proteinExistence type="evidence at transcript level"/>
<evidence type="ECO:0000250" key="1"/>
<evidence type="ECO:0000255" key="2"/>
<evidence type="ECO:0000255" key="3">
    <source>
        <dbReference type="PROSITE-ProRule" id="PRU00107"/>
    </source>
</evidence>
<evidence type="ECO:0000255" key="4">
    <source>
        <dbReference type="PROSITE-ProRule" id="PRU00141"/>
    </source>
</evidence>
<evidence type="ECO:0000255" key="5">
    <source>
        <dbReference type="PROSITE-ProRule" id="PRU00169"/>
    </source>
</evidence>
<evidence type="ECO:0000256" key="6">
    <source>
        <dbReference type="SAM" id="MobiDB-lite"/>
    </source>
</evidence>
<evidence type="ECO:0000305" key="7"/>
<organism>
    <name type="scientific">Dictyostelium discoideum</name>
    <name type="common">Social amoeba</name>
    <dbReference type="NCBI Taxonomy" id="44689"/>
    <lineage>
        <taxon>Eukaryota</taxon>
        <taxon>Amoebozoa</taxon>
        <taxon>Evosea</taxon>
        <taxon>Eumycetozoa</taxon>
        <taxon>Dictyostelia</taxon>
        <taxon>Dictyosteliales</taxon>
        <taxon>Dictyosteliaceae</taxon>
        <taxon>Dictyostelium</taxon>
    </lineage>
</organism>
<gene>
    <name type="primary">dhkD</name>
    <name type="ORF">DDB_G0282289</name>
</gene>
<reference key="1">
    <citation type="book" date="2001" name="Histidine kinases in signal transduction">
        <title>The histidine kinases of Dictyostelium.</title>
        <editorList>
            <person name="Inouye M."/>
            <person name="Dutta R."/>
        </editorList>
        <authorList>
            <person name="Anjard C."/>
            <person name="Loomis W.F."/>
        </authorList>
    </citation>
    <scope>NUCLEOTIDE SEQUENCE [GENOMIC DNA]</scope>
</reference>
<reference key="2">
    <citation type="journal article" date="2005" name="Nature">
        <title>The genome of the social amoeba Dictyostelium discoideum.</title>
        <authorList>
            <person name="Eichinger L."/>
            <person name="Pachebat J.A."/>
            <person name="Gloeckner G."/>
            <person name="Rajandream M.A."/>
            <person name="Sucgang R."/>
            <person name="Berriman M."/>
            <person name="Song J."/>
            <person name="Olsen R."/>
            <person name="Szafranski K."/>
            <person name="Xu Q."/>
            <person name="Tunggal B."/>
            <person name="Kummerfeld S."/>
            <person name="Madera M."/>
            <person name="Konfortov B.A."/>
            <person name="Rivero F."/>
            <person name="Bankier A.T."/>
            <person name="Lehmann R."/>
            <person name="Hamlin N."/>
            <person name="Davies R."/>
            <person name="Gaudet P."/>
            <person name="Fey P."/>
            <person name="Pilcher K."/>
            <person name="Chen G."/>
            <person name="Saunders D."/>
            <person name="Sodergren E.J."/>
            <person name="Davis P."/>
            <person name="Kerhornou A."/>
            <person name="Nie X."/>
            <person name="Hall N."/>
            <person name="Anjard C."/>
            <person name="Hemphill L."/>
            <person name="Bason N."/>
            <person name="Farbrother P."/>
            <person name="Desany B."/>
            <person name="Just E."/>
            <person name="Morio T."/>
            <person name="Rost R."/>
            <person name="Churcher C.M."/>
            <person name="Cooper J."/>
            <person name="Haydock S."/>
            <person name="van Driessche N."/>
            <person name="Cronin A."/>
            <person name="Goodhead I."/>
            <person name="Muzny D.M."/>
            <person name="Mourier T."/>
            <person name="Pain A."/>
            <person name="Lu M."/>
            <person name="Harper D."/>
            <person name="Lindsay R."/>
            <person name="Hauser H."/>
            <person name="James K.D."/>
            <person name="Quiles M."/>
            <person name="Madan Babu M."/>
            <person name="Saito T."/>
            <person name="Buchrieser C."/>
            <person name="Wardroper A."/>
            <person name="Felder M."/>
            <person name="Thangavelu M."/>
            <person name="Johnson D."/>
            <person name="Knights A."/>
            <person name="Loulseged H."/>
            <person name="Mungall K.L."/>
            <person name="Oliver K."/>
            <person name="Price C."/>
            <person name="Quail M.A."/>
            <person name="Urushihara H."/>
            <person name="Hernandez J."/>
            <person name="Rabbinowitsch E."/>
            <person name="Steffen D."/>
            <person name="Sanders M."/>
            <person name="Ma J."/>
            <person name="Kohara Y."/>
            <person name="Sharp S."/>
            <person name="Simmonds M.N."/>
            <person name="Spiegler S."/>
            <person name="Tivey A."/>
            <person name="Sugano S."/>
            <person name="White B."/>
            <person name="Walker D."/>
            <person name="Woodward J.R."/>
            <person name="Winckler T."/>
            <person name="Tanaka Y."/>
            <person name="Shaulsky G."/>
            <person name="Schleicher M."/>
            <person name="Weinstock G.M."/>
            <person name="Rosenthal A."/>
            <person name="Cox E.C."/>
            <person name="Chisholm R.L."/>
            <person name="Gibbs R.A."/>
            <person name="Loomis W.F."/>
            <person name="Platzer M."/>
            <person name="Kay R.R."/>
            <person name="Williams J.G."/>
            <person name="Dear P.H."/>
            <person name="Noegel A.A."/>
            <person name="Barrell B.G."/>
            <person name="Kuspa A."/>
        </authorList>
    </citation>
    <scope>NUCLEOTIDE SEQUENCE [LARGE SCALE GENOMIC DNA]</scope>
    <source>
        <strain>AX4</strain>
    </source>
</reference>
<reference key="3">
    <citation type="submission" date="1997-10" db="EMBL/GenBank/DDBJ databases">
        <title>dhkD, a histidine kinase gene of Dictyostelium discoideum.</title>
        <authorList>
            <person name="Singleton C.K."/>
            <person name="Zinda M."/>
        </authorList>
    </citation>
    <scope>NUCLEOTIDE SEQUENCE [MRNA] OF 1-744</scope>
</reference>
<accession>Q54SP4</accession>
<accession>O15783</accession>
<accession>Q95PI1</accession>
<feature type="chain" id="PRO_0000328270" description="Hybrid signal transduction histidine kinase D">
    <location>
        <begin position="1"/>
        <end position="1546"/>
    </location>
</feature>
<feature type="domain" description="PAS">
    <location>
        <begin position="65"/>
        <end position="131"/>
    </location>
</feature>
<feature type="domain" description="PAC" evidence="4">
    <location>
        <begin position="139"/>
        <end position="193"/>
    </location>
</feature>
<feature type="domain" description="Histidine kinase 1" evidence="3">
    <location>
        <begin position="218"/>
        <end position="440"/>
    </location>
</feature>
<feature type="domain" description="Response regulatory 1" evidence="5">
    <location>
        <begin position="571"/>
        <end position="686"/>
    </location>
</feature>
<feature type="domain" description="Histidine kinase 2" evidence="3">
    <location>
        <begin position="747"/>
        <end position="1010"/>
    </location>
</feature>
<feature type="domain" description="Response regulatory 2" evidence="5">
    <location>
        <begin position="1359"/>
        <end position="1483"/>
    </location>
</feature>
<feature type="region of interest" description="Disordered" evidence="6">
    <location>
        <begin position="1013"/>
        <end position="1148"/>
    </location>
</feature>
<feature type="region of interest" description="Disordered" evidence="6">
    <location>
        <begin position="1266"/>
        <end position="1285"/>
    </location>
</feature>
<feature type="region of interest" description="Disordered" evidence="6">
    <location>
        <begin position="1313"/>
        <end position="1350"/>
    </location>
</feature>
<feature type="region of interest" description="Disordered" evidence="6">
    <location>
        <begin position="1500"/>
        <end position="1546"/>
    </location>
</feature>
<feature type="coiled-coil region" evidence="2">
    <location>
        <begin position="36"/>
        <end position="63"/>
    </location>
</feature>
<feature type="compositionally biased region" description="Low complexity" evidence="6">
    <location>
        <begin position="1013"/>
        <end position="1031"/>
    </location>
</feature>
<feature type="compositionally biased region" description="Low complexity" evidence="6">
    <location>
        <begin position="1042"/>
        <end position="1146"/>
    </location>
</feature>
<feature type="compositionally biased region" description="Low complexity" evidence="6">
    <location>
        <begin position="1313"/>
        <end position="1346"/>
    </location>
</feature>
<feature type="compositionally biased region" description="Low complexity" evidence="6">
    <location>
        <begin position="1501"/>
        <end position="1526"/>
    </location>
</feature>
<feature type="modified residue" description="Phosphohistidine; by autocatalysis" evidence="3">
    <location>
        <position position="221"/>
    </location>
</feature>
<feature type="modified residue" description="4-aspartylphosphate" evidence="5">
    <location>
        <position position="619"/>
    </location>
</feature>
<feature type="modified residue" description="Phosphohistidine; by autocatalysis" evidence="3">
    <location>
        <position position="750"/>
    </location>
</feature>
<feature type="modified residue" description="4-aspartylphosphate" evidence="5">
    <location>
        <position position="1412"/>
    </location>
</feature>
<feature type="sequence conflict" description="In Ref. 1; AAK50005 and 3; AAB84171." evidence="7" ref="1 3">
    <original>RW</original>
    <variation>SR</variation>
    <location>
        <begin position="114"/>
        <end position="115"/>
    </location>
</feature>
<feature type="sequence conflict" description="In Ref. 3; AAB84171." evidence="7" ref="3">
    <original>G</original>
    <variation>C</variation>
    <location>
        <position position="147"/>
    </location>
</feature>
<feature type="sequence conflict" description="In Ref. 3; AAB84171." evidence="7" ref="3">
    <original>V</original>
    <variation>A</variation>
    <location>
        <position position="292"/>
    </location>
</feature>
<feature type="sequence conflict" description="In Ref. 3; AAB84171." evidence="7" ref="3">
    <original>V</original>
    <variation>G</variation>
    <location>
        <position position="349"/>
    </location>
</feature>
<feature type="sequence conflict" description="In Ref. 3; AAB84171." evidence="7" ref="3">
    <location>
        <position position="471"/>
    </location>
</feature>
<feature type="sequence conflict" description="In Ref. 3; AAB84171." evidence="7" ref="3">
    <original>K</original>
    <variation>R</variation>
    <location>
        <position position="520"/>
    </location>
</feature>
<feature type="sequence conflict" description="In Ref. 1; AAK50005." evidence="7" ref="1">
    <original>G</original>
    <variation>R</variation>
    <location>
        <position position="1150"/>
    </location>
</feature>
<feature type="sequence conflict" description="In Ref. 1; AAK50005." evidence="7" ref="1">
    <original>N</original>
    <variation>T</variation>
    <location>
        <position position="1158"/>
    </location>
</feature>
<keyword id="KW-0067">ATP-binding</keyword>
<keyword id="KW-0175">Coiled coil</keyword>
<keyword id="KW-0418">Kinase</keyword>
<keyword id="KW-0547">Nucleotide-binding</keyword>
<keyword id="KW-0597">Phosphoprotein</keyword>
<keyword id="KW-1185">Reference proteome</keyword>
<keyword id="KW-0677">Repeat</keyword>
<keyword id="KW-0807">Transducer</keyword>
<keyword id="KW-0808">Transferase</keyword>
<keyword id="KW-0902">Two-component regulatory system</keyword>
<protein>
    <recommendedName>
        <fullName>Hybrid signal transduction histidine kinase D</fullName>
        <ecNumber>2.7.13.3</ecNumber>
    </recommendedName>
</protein>